<organism>
    <name type="scientific">Saccharomyces cerevisiae (strain ATCC 204508 / S288c)</name>
    <name type="common">Baker's yeast</name>
    <dbReference type="NCBI Taxonomy" id="559292"/>
    <lineage>
        <taxon>Eukaryota</taxon>
        <taxon>Fungi</taxon>
        <taxon>Dikarya</taxon>
        <taxon>Ascomycota</taxon>
        <taxon>Saccharomycotina</taxon>
        <taxon>Saccharomycetes</taxon>
        <taxon>Saccharomycetales</taxon>
        <taxon>Saccharomycetaceae</taxon>
        <taxon>Saccharomyces</taxon>
    </lineage>
</organism>
<protein>
    <recommendedName>
        <fullName>Actin patches distal protein 1</fullName>
    </recommendedName>
</protein>
<sequence length="316" mass="35759">MAFLNIFKQKRGDEASQLSAKGREEISQSIKICKSDDAANEHSCSGDCKTEIEEGEQAFAKLKIEHETPLLNSSKTPKIHFVVPTSQIDWQHDACLEDPKSVQYKISQWCDKNSAKFSNVGTGKTLNCAVSSLPKDIMDIDVMRGTKNNVLILPYFIWLNDLRSDDVEATLDGLVPDLLDENISREKLLETRPNVAVARERAFVFICSHTTRDKRCGITAPYLKKVFDSKLQEHGLYRDNSDYRAEGVKIAFVNHVGGHKFAANVQIYLRNPNTLIWLGRVTPTIVPSIVEHLIVPEEPTLPFPEKVRCIKKYQSW</sequence>
<evidence type="ECO:0000269" key="1">
    <source>
    </source>
</evidence>
<evidence type="ECO:0000269" key="2">
    <source>
    </source>
</evidence>
<evidence type="ECO:0000269" key="3">
    <source>
    </source>
</evidence>
<evidence type="ECO:0000269" key="4">
    <source>
    </source>
</evidence>
<evidence type="ECO:0000305" key="5"/>
<dbReference type="EMBL" id="Z36020">
    <property type="protein sequence ID" value="CAA85109.1"/>
    <property type="molecule type" value="Genomic_DNA"/>
</dbReference>
<dbReference type="EMBL" id="AY693048">
    <property type="protein sequence ID" value="AAT93067.1"/>
    <property type="molecule type" value="Genomic_DNA"/>
</dbReference>
<dbReference type="EMBL" id="BK006936">
    <property type="protein sequence ID" value="DAA07266.1"/>
    <property type="molecule type" value="Genomic_DNA"/>
</dbReference>
<dbReference type="PIR" id="S46022">
    <property type="entry name" value="S46022"/>
</dbReference>
<dbReference type="RefSeq" id="NP_009709.1">
    <property type="nucleotide sequence ID" value="NM_001178499.1"/>
</dbReference>
<dbReference type="SMR" id="P38281"/>
<dbReference type="BioGRID" id="32850">
    <property type="interactions" value="39"/>
</dbReference>
<dbReference type="FunCoup" id="P38281">
    <property type="interactions" value="71"/>
</dbReference>
<dbReference type="IntAct" id="P38281">
    <property type="interactions" value="6"/>
</dbReference>
<dbReference type="MINT" id="P38281"/>
<dbReference type="STRING" id="4932.YBR151W"/>
<dbReference type="iPTMnet" id="P38281"/>
<dbReference type="PaxDb" id="4932-YBR151W"/>
<dbReference type="PeptideAtlas" id="P38281"/>
<dbReference type="EnsemblFungi" id="YBR151W_mRNA">
    <property type="protein sequence ID" value="YBR151W"/>
    <property type="gene ID" value="YBR151W"/>
</dbReference>
<dbReference type="GeneID" id="852448"/>
<dbReference type="KEGG" id="sce:YBR151W"/>
<dbReference type="AGR" id="SGD:S000000355"/>
<dbReference type="SGD" id="S000000355">
    <property type="gene designation" value="APD1"/>
</dbReference>
<dbReference type="VEuPathDB" id="FungiDB:YBR151W"/>
<dbReference type="eggNOG" id="ENOG502QT0V">
    <property type="taxonomic scope" value="Eukaryota"/>
</dbReference>
<dbReference type="GeneTree" id="ENSGT00940000176686"/>
<dbReference type="HOGENOM" id="CLU_033921_1_0_1"/>
<dbReference type="InParanoid" id="P38281"/>
<dbReference type="OMA" id="CTIKYPA"/>
<dbReference type="OrthoDB" id="10253744at2759"/>
<dbReference type="BioCyc" id="YEAST:G3O-29102-MONOMER"/>
<dbReference type="BioGRID-ORCS" id="852448">
    <property type="hits" value="0 hits in 10 CRISPR screens"/>
</dbReference>
<dbReference type="PRO" id="PR:P38281"/>
<dbReference type="Proteomes" id="UP000002311">
    <property type="component" value="Chromosome II"/>
</dbReference>
<dbReference type="RNAct" id="P38281">
    <property type="molecule type" value="protein"/>
</dbReference>
<dbReference type="GO" id="GO:0005737">
    <property type="term" value="C:cytoplasm"/>
    <property type="evidence" value="ECO:0007005"/>
    <property type="project" value="SGD"/>
</dbReference>
<dbReference type="GO" id="GO:0005829">
    <property type="term" value="C:cytosol"/>
    <property type="evidence" value="ECO:0000314"/>
    <property type="project" value="SGD"/>
</dbReference>
<dbReference type="GO" id="GO:0005634">
    <property type="term" value="C:nucleus"/>
    <property type="evidence" value="ECO:0007005"/>
    <property type="project" value="SGD"/>
</dbReference>
<dbReference type="CDD" id="cd03062">
    <property type="entry name" value="TRX_Fd_Sucrase"/>
    <property type="match status" value="1"/>
</dbReference>
<dbReference type="FunFam" id="3.40.30.10:FF:000213">
    <property type="entry name" value="APD1p protein"/>
    <property type="match status" value="1"/>
</dbReference>
<dbReference type="Gene3D" id="3.40.30.10">
    <property type="entry name" value="Glutaredoxin"/>
    <property type="match status" value="1"/>
</dbReference>
<dbReference type="InterPro" id="IPR009737">
    <property type="entry name" value="Aim32/Apd1-like"/>
</dbReference>
<dbReference type="InterPro" id="IPR036249">
    <property type="entry name" value="Thioredoxin-like_sf"/>
</dbReference>
<dbReference type="PANTHER" id="PTHR31902">
    <property type="entry name" value="ACTIN PATCHES DISTAL PROTEIN 1"/>
    <property type="match status" value="1"/>
</dbReference>
<dbReference type="PANTHER" id="PTHR31902:SF14">
    <property type="entry name" value="ACTIN PATCHES DISTAL PROTEIN 1"/>
    <property type="match status" value="1"/>
</dbReference>
<dbReference type="Pfam" id="PF06999">
    <property type="entry name" value="Suc_Fer-like"/>
    <property type="match status" value="1"/>
</dbReference>
<dbReference type="SUPFAM" id="SSF52833">
    <property type="entry name" value="Thioredoxin-like"/>
    <property type="match status" value="1"/>
</dbReference>
<comment type="function">
    <text evidence="1">Required for normal localization of actin patches. Involved in tolerance to sodium ions and hydrogen peroxide.</text>
</comment>
<comment type="subcellular location">
    <subcellularLocation>
        <location evidence="3">Cytoplasm</location>
    </subcellularLocation>
    <subcellularLocation>
        <location evidence="3">Nucleus</location>
    </subcellularLocation>
</comment>
<comment type="induction">
    <text evidence="2">Expression is controlled by the transcription factor YRR1.</text>
</comment>
<comment type="miscellaneous">
    <text evidence="4">Present with 2000 molecules/cell in log phase SD medium.</text>
</comment>
<comment type="similarity">
    <text evidence="5">Belongs to the APD1 family.</text>
</comment>
<reference key="1">
    <citation type="journal article" date="1994" name="EMBO J.">
        <title>Complete DNA sequence of yeast chromosome II.</title>
        <authorList>
            <person name="Feldmann H."/>
            <person name="Aigle M."/>
            <person name="Aljinovic G."/>
            <person name="Andre B."/>
            <person name="Baclet M.C."/>
            <person name="Barthe C."/>
            <person name="Baur A."/>
            <person name="Becam A.-M."/>
            <person name="Biteau N."/>
            <person name="Boles E."/>
            <person name="Brandt T."/>
            <person name="Brendel M."/>
            <person name="Brueckner M."/>
            <person name="Bussereau F."/>
            <person name="Christiansen C."/>
            <person name="Contreras R."/>
            <person name="Crouzet M."/>
            <person name="Cziepluch C."/>
            <person name="Demolis N."/>
            <person name="Delaveau T."/>
            <person name="Doignon F."/>
            <person name="Domdey H."/>
            <person name="Duesterhus S."/>
            <person name="Dubois E."/>
            <person name="Dujon B."/>
            <person name="El Bakkoury M."/>
            <person name="Entian K.-D."/>
            <person name="Feuermann M."/>
            <person name="Fiers W."/>
            <person name="Fobo G.M."/>
            <person name="Fritz C."/>
            <person name="Gassenhuber J."/>
            <person name="Glansdorff N."/>
            <person name="Goffeau A."/>
            <person name="Grivell L.A."/>
            <person name="de Haan M."/>
            <person name="Hein C."/>
            <person name="Herbert C.J."/>
            <person name="Hollenberg C.P."/>
            <person name="Holmstroem K."/>
            <person name="Jacq C."/>
            <person name="Jacquet M."/>
            <person name="Jauniaux J.-C."/>
            <person name="Jonniaux J.-L."/>
            <person name="Kallesoee T."/>
            <person name="Kiesau P."/>
            <person name="Kirchrath L."/>
            <person name="Koetter P."/>
            <person name="Korol S."/>
            <person name="Liebl S."/>
            <person name="Logghe M."/>
            <person name="Lohan A.J.E."/>
            <person name="Louis E.J."/>
            <person name="Li Z.Y."/>
            <person name="Maat M.J."/>
            <person name="Mallet L."/>
            <person name="Mannhaupt G."/>
            <person name="Messenguy F."/>
            <person name="Miosga T."/>
            <person name="Molemans F."/>
            <person name="Mueller S."/>
            <person name="Nasr F."/>
            <person name="Obermaier B."/>
            <person name="Perea J."/>
            <person name="Pierard A."/>
            <person name="Piravandi E."/>
            <person name="Pohl F.M."/>
            <person name="Pohl T.M."/>
            <person name="Potier S."/>
            <person name="Proft M."/>
            <person name="Purnelle B."/>
            <person name="Ramezani Rad M."/>
            <person name="Rieger M."/>
            <person name="Rose M."/>
            <person name="Schaaff-Gerstenschlaeger I."/>
            <person name="Scherens B."/>
            <person name="Schwarzlose C."/>
            <person name="Skala J."/>
            <person name="Slonimski P.P."/>
            <person name="Smits P.H.M."/>
            <person name="Souciet J.-L."/>
            <person name="Steensma H.Y."/>
            <person name="Stucka R."/>
            <person name="Urrestarazu L.A."/>
            <person name="van der Aart Q.J.M."/>
            <person name="Van Dyck L."/>
            <person name="Vassarotti A."/>
            <person name="Vetter I."/>
            <person name="Vierendeels F."/>
            <person name="Vissers S."/>
            <person name="Wagner G."/>
            <person name="de Wergifosse P."/>
            <person name="Wolfe K.H."/>
            <person name="Zagulski M."/>
            <person name="Zimmermann F.K."/>
            <person name="Mewes H.-W."/>
            <person name="Kleine K."/>
        </authorList>
    </citation>
    <scope>NUCLEOTIDE SEQUENCE [LARGE SCALE GENOMIC DNA]</scope>
    <source>
        <strain>ATCC 204508 / S288c</strain>
    </source>
</reference>
<reference key="2">
    <citation type="journal article" date="2014" name="G3 (Bethesda)">
        <title>The reference genome sequence of Saccharomyces cerevisiae: Then and now.</title>
        <authorList>
            <person name="Engel S.R."/>
            <person name="Dietrich F.S."/>
            <person name="Fisk D.G."/>
            <person name="Binkley G."/>
            <person name="Balakrishnan R."/>
            <person name="Costanzo M.C."/>
            <person name="Dwight S.S."/>
            <person name="Hitz B.C."/>
            <person name="Karra K."/>
            <person name="Nash R.S."/>
            <person name="Weng S."/>
            <person name="Wong E.D."/>
            <person name="Lloyd P."/>
            <person name="Skrzypek M.S."/>
            <person name="Miyasato S.R."/>
            <person name="Simison M."/>
            <person name="Cherry J.M."/>
        </authorList>
    </citation>
    <scope>GENOME REANNOTATION</scope>
    <source>
        <strain>ATCC 204508 / S288c</strain>
    </source>
</reference>
<reference key="3">
    <citation type="journal article" date="2007" name="Genome Res.">
        <title>Approaching a complete repository of sequence-verified protein-encoding clones for Saccharomyces cerevisiae.</title>
        <authorList>
            <person name="Hu Y."/>
            <person name="Rolfs A."/>
            <person name="Bhullar B."/>
            <person name="Murthy T.V.S."/>
            <person name="Zhu C."/>
            <person name="Berger M.F."/>
            <person name="Camargo A.A."/>
            <person name="Kelley F."/>
            <person name="McCarron S."/>
            <person name="Jepson D."/>
            <person name="Richardson A."/>
            <person name="Raphael J."/>
            <person name="Moreira D."/>
            <person name="Taycher E."/>
            <person name="Zuo D."/>
            <person name="Mohr S."/>
            <person name="Kane M.F."/>
            <person name="Williamson J."/>
            <person name="Simpson A.J.G."/>
            <person name="Bulyk M.L."/>
            <person name="Harlow E."/>
            <person name="Marsischky G."/>
            <person name="Kolodner R.D."/>
            <person name="LaBaer J."/>
        </authorList>
    </citation>
    <scope>NUCLEOTIDE SEQUENCE [GENOMIC DNA]</scope>
    <source>
        <strain>ATCC 204508 / S288c</strain>
    </source>
</reference>
<reference key="4">
    <citation type="journal article" date="1999" name="Mol. Gen. Genet.">
        <title>Functional analysis of 150 deletion mutants in Saccharomyces cerevisiae by a systematic approach.</title>
        <authorList>
            <person name="Entian K.-D."/>
            <person name="Schuster T."/>
            <person name="Hegemann J.H."/>
            <person name="Becher D."/>
            <person name="Feldmann H."/>
            <person name="Gueldener U."/>
            <person name="Goetz R."/>
            <person name="Hansen M."/>
            <person name="Hollenberg C.P."/>
            <person name="Jansen G."/>
            <person name="Kramer W."/>
            <person name="Klein S."/>
            <person name="Koetter P."/>
            <person name="Kricke J."/>
            <person name="Launhardt H."/>
            <person name="Mannhaupt G."/>
            <person name="Maierl A."/>
            <person name="Meyer P."/>
            <person name="Mewes W."/>
            <person name="Munder T."/>
            <person name="Niedenthal R.K."/>
            <person name="Ramezani Rad M."/>
            <person name="Roehmer A."/>
            <person name="Roemer A."/>
            <person name="Rose M."/>
            <person name="Schaefer B."/>
            <person name="Siegler M.-L."/>
            <person name="Vetter J."/>
            <person name="Wilhelm N."/>
            <person name="Wolf K."/>
            <person name="Zimmermann F.K."/>
            <person name="Zollner A."/>
            <person name="Hinnen A."/>
        </authorList>
    </citation>
    <scope>FUNCTION</scope>
</reference>
<reference key="5">
    <citation type="journal article" date="2002" name="Mol. Cell. Biol.">
        <title>New insights into the pleiotropic drug resistance network from genome-wide characterization of the YRR1 transcription factor regulation system.</title>
        <authorList>
            <person name="Le Crom S."/>
            <person name="Devaux F."/>
            <person name="Marc P."/>
            <person name="Zhang X."/>
            <person name="Moye-Rowley W.S."/>
            <person name="Jacq C."/>
        </authorList>
    </citation>
    <scope>INDUCTION</scope>
</reference>
<reference key="6">
    <citation type="journal article" date="2003" name="Nature">
        <title>Global analysis of protein localization in budding yeast.</title>
        <authorList>
            <person name="Huh W.-K."/>
            <person name="Falvo J.V."/>
            <person name="Gerke L.C."/>
            <person name="Carroll A.S."/>
            <person name="Howson R.W."/>
            <person name="Weissman J.S."/>
            <person name="O'Shea E.K."/>
        </authorList>
    </citation>
    <scope>SUBCELLULAR LOCATION [LARGE SCALE ANALYSIS]</scope>
</reference>
<reference key="7">
    <citation type="journal article" date="2003" name="Nature">
        <title>Global analysis of protein expression in yeast.</title>
        <authorList>
            <person name="Ghaemmaghami S."/>
            <person name="Huh W.-K."/>
            <person name="Bower K."/>
            <person name="Howson R.W."/>
            <person name="Belle A."/>
            <person name="Dephoure N."/>
            <person name="O'Shea E.K."/>
            <person name="Weissman J.S."/>
        </authorList>
    </citation>
    <scope>LEVEL OF PROTEIN EXPRESSION [LARGE SCALE ANALYSIS]</scope>
</reference>
<reference key="8">
    <citation type="journal article" date="2012" name="Proc. Natl. Acad. Sci. U.S.A.">
        <title>N-terminal acetylome analyses and functional insights of the N-terminal acetyltransferase NatB.</title>
        <authorList>
            <person name="Van Damme P."/>
            <person name="Lasa M."/>
            <person name="Polevoda B."/>
            <person name="Gazquez C."/>
            <person name="Elosegui-Artola A."/>
            <person name="Kim D.S."/>
            <person name="De Juan-Pardo E."/>
            <person name="Demeyer K."/>
            <person name="Hole K."/>
            <person name="Larrea E."/>
            <person name="Timmerman E."/>
            <person name="Prieto J."/>
            <person name="Arnesen T."/>
            <person name="Sherman F."/>
            <person name="Gevaert K."/>
            <person name="Aldabe R."/>
        </authorList>
    </citation>
    <scope>IDENTIFICATION BY MASS SPECTROMETRY [LARGE SCALE ANALYSIS]</scope>
</reference>
<keyword id="KW-0963">Cytoplasm</keyword>
<keyword id="KW-0539">Nucleus</keyword>
<keyword id="KW-1185">Reference proteome</keyword>
<accession>P38281</accession>
<accession>D6VQE6</accession>
<gene>
    <name type="primary">APD1</name>
    <name type="ordered locus">YBR151W</name>
    <name type="ORF">YBR1201</name>
</gene>
<feature type="chain" id="PRO_0000202497" description="Actin patches distal protein 1">
    <location>
        <begin position="1"/>
        <end position="316"/>
    </location>
</feature>
<proteinExistence type="evidence at protein level"/>
<name>APD1_YEAST</name>